<evidence type="ECO:0000255" key="1">
    <source>
        <dbReference type="HAMAP-Rule" id="MF_00141"/>
    </source>
</evidence>
<dbReference type="EMBL" id="CP001157">
    <property type="protein sequence ID" value="ACO77743.1"/>
    <property type="molecule type" value="Genomic_DNA"/>
</dbReference>
<dbReference type="RefSeq" id="WP_012700159.1">
    <property type="nucleotide sequence ID" value="NC_012560.1"/>
</dbReference>
<dbReference type="SMR" id="C1DRK5"/>
<dbReference type="STRING" id="322710.Avin_15280"/>
<dbReference type="EnsemblBacteria" id="ACO77743">
    <property type="protein sequence ID" value="ACO77743"/>
    <property type="gene ID" value="Avin_15280"/>
</dbReference>
<dbReference type="GeneID" id="88184820"/>
<dbReference type="KEGG" id="avn:Avin_15280"/>
<dbReference type="eggNOG" id="COG0231">
    <property type="taxonomic scope" value="Bacteria"/>
</dbReference>
<dbReference type="HOGENOM" id="CLU_074944_2_1_6"/>
<dbReference type="OrthoDB" id="9801844at2"/>
<dbReference type="UniPathway" id="UPA00345"/>
<dbReference type="Proteomes" id="UP000002424">
    <property type="component" value="Chromosome"/>
</dbReference>
<dbReference type="GO" id="GO:0005737">
    <property type="term" value="C:cytoplasm"/>
    <property type="evidence" value="ECO:0007669"/>
    <property type="project" value="UniProtKB-SubCell"/>
</dbReference>
<dbReference type="GO" id="GO:0003746">
    <property type="term" value="F:translation elongation factor activity"/>
    <property type="evidence" value="ECO:0007669"/>
    <property type="project" value="UniProtKB-UniRule"/>
</dbReference>
<dbReference type="GO" id="GO:0043043">
    <property type="term" value="P:peptide biosynthetic process"/>
    <property type="evidence" value="ECO:0007669"/>
    <property type="project" value="InterPro"/>
</dbReference>
<dbReference type="CDD" id="cd04470">
    <property type="entry name" value="S1_EF-P_repeat_1"/>
    <property type="match status" value="1"/>
</dbReference>
<dbReference type="FunFam" id="2.30.30.30:FF:000003">
    <property type="entry name" value="Elongation factor P"/>
    <property type="match status" value="1"/>
</dbReference>
<dbReference type="FunFam" id="2.40.50.140:FF:000004">
    <property type="entry name" value="Elongation factor P"/>
    <property type="match status" value="1"/>
</dbReference>
<dbReference type="FunFam" id="2.40.50.140:FF:000009">
    <property type="entry name" value="Elongation factor P"/>
    <property type="match status" value="1"/>
</dbReference>
<dbReference type="Gene3D" id="2.30.30.30">
    <property type="match status" value="1"/>
</dbReference>
<dbReference type="Gene3D" id="2.40.50.140">
    <property type="entry name" value="Nucleic acid-binding proteins"/>
    <property type="match status" value="2"/>
</dbReference>
<dbReference type="HAMAP" id="MF_00141">
    <property type="entry name" value="EF_P"/>
    <property type="match status" value="1"/>
</dbReference>
<dbReference type="InterPro" id="IPR015365">
    <property type="entry name" value="Elong-fact-P_C"/>
</dbReference>
<dbReference type="InterPro" id="IPR012340">
    <property type="entry name" value="NA-bd_OB-fold"/>
</dbReference>
<dbReference type="InterPro" id="IPR014722">
    <property type="entry name" value="Rib_uL2_dom2"/>
</dbReference>
<dbReference type="InterPro" id="IPR020599">
    <property type="entry name" value="Transl_elong_fac_P/YeiP"/>
</dbReference>
<dbReference type="InterPro" id="IPR013185">
    <property type="entry name" value="Transl_elong_KOW-like"/>
</dbReference>
<dbReference type="InterPro" id="IPR001059">
    <property type="entry name" value="Transl_elong_P/YeiP_cen"/>
</dbReference>
<dbReference type="InterPro" id="IPR011768">
    <property type="entry name" value="Transl_elongation_fac_P"/>
</dbReference>
<dbReference type="InterPro" id="IPR008991">
    <property type="entry name" value="Translation_prot_SH3-like_sf"/>
</dbReference>
<dbReference type="NCBIfam" id="TIGR00038">
    <property type="entry name" value="efp"/>
    <property type="match status" value="1"/>
</dbReference>
<dbReference type="NCBIfam" id="NF001810">
    <property type="entry name" value="PRK00529.1"/>
    <property type="match status" value="1"/>
</dbReference>
<dbReference type="PANTHER" id="PTHR30053">
    <property type="entry name" value="ELONGATION FACTOR P"/>
    <property type="match status" value="1"/>
</dbReference>
<dbReference type="PANTHER" id="PTHR30053:SF12">
    <property type="entry name" value="ELONGATION FACTOR P (EF-P) FAMILY PROTEIN"/>
    <property type="match status" value="1"/>
</dbReference>
<dbReference type="Pfam" id="PF01132">
    <property type="entry name" value="EFP"/>
    <property type="match status" value="1"/>
</dbReference>
<dbReference type="Pfam" id="PF08207">
    <property type="entry name" value="EFP_N"/>
    <property type="match status" value="1"/>
</dbReference>
<dbReference type="Pfam" id="PF09285">
    <property type="entry name" value="Elong-fact-P_C"/>
    <property type="match status" value="1"/>
</dbReference>
<dbReference type="PIRSF" id="PIRSF005901">
    <property type="entry name" value="EF-P"/>
    <property type="match status" value="1"/>
</dbReference>
<dbReference type="SMART" id="SM01185">
    <property type="entry name" value="EFP"/>
    <property type="match status" value="1"/>
</dbReference>
<dbReference type="SMART" id="SM00841">
    <property type="entry name" value="Elong-fact-P_C"/>
    <property type="match status" value="1"/>
</dbReference>
<dbReference type="SUPFAM" id="SSF50249">
    <property type="entry name" value="Nucleic acid-binding proteins"/>
    <property type="match status" value="2"/>
</dbReference>
<dbReference type="SUPFAM" id="SSF50104">
    <property type="entry name" value="Translation proteins SH3-like domain"/>
    <property type="match status" value="1"/>
</dbReference>
<organism>
    <name type="scientific">Azotobacter vinelandii (strain DJ / ATCC BAA-1303)</name>
    <dbReference type="NCBI Taxonomy" id="322710"/>
    <lineage>
        <taxon>Bacteria</taxon>
        <taxon>Pseudomonadati</taxon>
        <taxon>Pseudomonadota</taxon>
        <taxon>Gammaproteobacteria</taxon>
        <taxon>Pseudomonadales</taxon>
        <taxon>Pseudomonadaceae</taxon>
        <taxon>Azotobacter</taxon>
    </lineage>
</organism>
<keyword id="KW-0963">Cytoplasm</keyword>
<keyword id="KW-0251">Elongation factor</keyword>
<keyword id="KW-0648">Protein biosynthesis</keyword>
<gene>
    <name evidence="1" type="primary">efp</name>
    <name type="ordered locus">Avin_15280</name>
</gene>
<proteinExistence type="inferred from homology"/>
<feature type="chain" id="PRO_1000203258" description="Elongation factor P">
    <location>
        <begin position="1"/>
        <end position="188"/>
    </location>
</feature>
<sequence>MKTAQEFRAGQVAMINGEPWVIQKAEFNKSGRNAAVVKMKLKNLLNGQATETVYKADDKFEPVILERKEVTYSYFADPMYVFMDNEFNQYEIEKDDLGDAYNFIEDGMQDVCEAVFYNDRVISIELPTTIVRQISYTEPAVRGDTSGKVMKVARLNSGYELRVAEFCDIGDYIEIDTRTFEYKSRAKA</sequence>
<name>EFP_AZOVD</name>
<accession>C1DRK5</accession>
<reference key="1">
    <citation type="journal article" date="2009" name="J. Bacteriol.">
        <title>Genome sequence of Azotobacter vinelandii, an obligate aerobe specialized to support diverse anaerobic metabolic processes.</title>
        <authorList>
            <person name="Setubal J.C."/>
            <person name="Dos Santos P."/>
            <person name="Goldman B.S."/>
            <person name="Ertesvaag H."/>
            <person name="Espin G."/>
            <person name="Rubio L.M."/>
            <person name="Valla S."/>
            <person name="Almeida N.F."/>
            <person name="Balasubramanian D."/>
            <person name="Cromes L."/>
            <person name="Curatti L."/>
            <person name="Du Z."/>
            <person name="Godsy E."/>
            <person name="Goodner B."/>
            <person name="Hellner-Burris K."/>
            <person name="Hernandez J.A."/>
            <person name="Houmiel K."/>
            <person name="Imperial J."/>
            <person name="Kennedy C."/>
            <person name="Larson T.J."/>
            <person name="Latreille P."/>
            <person name="Ligon L.S."/>
            <person name="Lu J."/>
            <person name="Maerk M."/>
            <person name="Miller N.M."/>
            <person name="Norton S."/>
            <person name="O'Carroll I.P."/>
            <person name="Paulsen I."/>
            <person name="Raulfs E.C."/>
            <person name="Roemer R."/>
            <person name="Rosser J."/>
            <person name="Segura D."/>
            <person name="Slater S."/>
            <person name="Stricklin S.L."/>
            <person name="Studholme D.J."/>
            <person name="Sun J."/>
            <person name="Viana C.J."/>
            <person name="Wallin E."/>
            <person name="Wang B."/>
            <person name="Wheeler C."/>
            <person name="Zhu H."/>
            <person name="Dean D.R."/>
            <person name="Dixon R."/>
            <person name="Wood D."/>
        </authorList>
    </citation>
    <scope>NUCLEOTIDE SEQUENCE [LARGE SCALE GENOMIC DNA]</scope>
    <source>
        <strain>DJ / ATCC BAA-1303</strain>
    </source>
</reference>
<comment type="function">
    <text evidence="1">Involved in peptide bond synthesis. Stimulates efficient translation and peptide-bond synthesis on native or reconstituted 70S ribosomes in vitro. Probably functions indirectly by altering the affinity of the ribosome for aminoacyl-tRNA, thus increasing their reactivity as acceptors for peptidyl transferase.</text>
</comment>
<comment type="pathway">
    <text evidence="1">Protein biosynthesis; polypeptide chain elongation.</text>
</comment>
<comment type="subcellular location">
    <subcellularLocation>
        <location evidence="1">Cytoplasm</location>
    </subcellularLocation>
</comment>
<comment type="similarity">
    <text evidence="1">Belongs to the elongation factor P family.</text>
</comment>
<protein>
    <recommendedName>
        <fullName evidence="1">Elongation factor P</fullName>
        <shortName evidence="1">EF-P</shortName>
    </recommendedName>
</protein>